<gene>
    <name evidence="1" type="primary">argS</name>
    <name type="ordered locus">EcolC_1756</name>
</gene>
<proteinExistence type="inferred from homology"/>
<organism>
    <name type="scientific">Escherichia coli (strain ATCC 8739 / DSM 1576 / NBRC 3972 / NCIMB 8545 / WDCM 00012 / Crooks)</name>
    <dbReference type="NCBI Taxonomy" id="481805"/>
    <lineage>
        <taxon>Bacteria</taxon>
        <taxon>Pseudomonadati</taxon>
        <taxon>Pseudomonadota</taxon>
        <taxon>Gammaproteobacteria</taxon>
        <taxon>Enterobacterales</taxon>
        <taxon>Enterobacteriaceae</taxon>
        <taxon>Escherichia</taxon>
    </lineage>
</organism>
<reference key="1">
    <citation type="submission" date="2008-02" db="EMBL/GenBank/DDBJ databases">
        <title>Complete sequence of Escherichia coli C str. ATCC 8739.</title>
        <authorList>
            <person name="Copeland A."/>
            <person name="Lucas S."/>
            <person name="Lapidus A."/>
            <person name="Glavina del Rio T."/>
            <person name="Dalin E."/>
            <person name="Tice H."/>
            <person name="Bruce D."/>
            <person name="Goodwin L."/>
            <person name="Pitluck S."/>
            <person name="Kiss H."/>
            <person name="Brettin T."/>
            <person name="Detter J.C."/>
            <person name="Han C."/>
            <person name="Kuske C.R."/>
            <person name="Schmutz J."/>
            <person name="Larimer F."/>
            <person name="Land M."/>
            <person name="Hauser L."/>
            <person name="Kyrpides N."/>
            <person name="Mikhailova N."/>
            <person name="Ingram L."/>
            <person name="Richardson P."/>
        </authorList>
    </citation>
    <scope>NUCLEOTIDE SEQUENCE [LARGE SCALE GENOMIC DNA]</scope>
    <source>
        <strain>ATCC 8739 / DSM 1576 / NBRC 3972 / NCIMB 8545 / WDCM 00012 / Crooks</strain>
    </source>
</reference>
<protein>
    <recommendedName>
        <fullName evidence="1">Arginine--tRNA ligase</fullName>
        <ecNumber evidence="1">6.1.1.19</ecNumber>
    </recommendedName>
    <alternativeName>
        <fullName evidence="1">Arginyl-tRNA synthetase</fullName>
        <shortName evidence="1">ArgRS</shortName>
    </alternativeName>
</protein>
<accession>B1J0L2</accession>
<name>SYR_ECOLC</name>
<keyword id="KW-0030">Aminoacyl-tRNA synthetase</keyword>
<keyword id="KW-0067">ATP-binding</keyword>
<keyword id="KW-0963">Cytoplasm</keyword>
<keyword id="KW-0436">Ligase</keyword>
<keyword id="KW-0547">Nucleotide-binding</keyword>
<keyword id="KW-0648">Protein biosynthesis</keyword>
<feature type="chain" id="PRO_1000076214" description="Arginine--tRNA ligase">
    <location>
        <begin position="1"/>
        <end position="577"/>
    </location>
</feature>
<feature type="short sequence motif" description="'HIGH' region">
    <location>
        <begin position="122"/>
        <end position="132"/>
    </location>
</feature>
<evidence type="ECO:0000255" key="1">
    <source>
        <dbReference type="HAMAP-Rule" id="MF_00123"/>
    </source>
</evidence>
<sequence>MNIQALLSEKVRQAMIAAGAPADCEPQVRQSAKVQFGDYQANGMMAVAKKLGMAPRQLAEQVLTHLDLNGIASKVEIAGPGFINIFLDPAFLAEHVQQALASDRLGVATPEKQTIVVDYSAPNVAKEMHVGHLRSTIIGDAAVRTLEFLGHKVIRANHVGDWGTQFGMLIAWLEKQQQENAGEMELADLEGFYRDAKKHYDEDEEFAERARNYVVKLQSGDEYFREMWRKLVDITMTQNQITYDRLNVTLTRDDVMGESLYNPMLPGIVADLKAKGLAVESEGATVVFLDEFKNKEGEPMGVIIQKKDGGYLYTTTDIACAKYRYETLHADRVLYYIDSRQHQHLMQAWAIVRKAGYVPESVPLEHHMFGMMLGKDGKPFKTRAGGTVKLADLLDEALERARRLVAEKNPDMPADELEKLANAVGIGAVKYADLSKNRTTDYIFDWDNMLAFEGNTAPYMQYAYTRVLSVFRKAEINEEQLAAAPVIIREDREAQLAARLLQFEETLTVVAREGTPHVMCAYLYDLAGLFSGFYEHCPILSAENEEVRNSRLKLAQLTAKTLKLGLDTLGIETVERM</sequence>
<dbReference type="EC" id="6.1.1.19" evidence="1"/>
<dbReference type="EMBL" id="CP000946">
    <property type="protein sequence ID" value="ACA77406.1"/>
    <property type="molecule type" value="Genomic_DNA"/>
</dbReference>
<dbReference type="RefSeq" id="WP_001025326.1">
    <property type="nucleotide sequence ID" value="NZ_MTFT01000011.1"/>
</dbReference>
<dbReference type="SMR" id="B1J0L2"/>
<dbReference type="KEGG" id="ecl:EcolC_1756"/>
<dbReference type="HOGENOM" id="CLU_006406_5_1_6"/>
<dbReference type="GO" id="GO:0005737">
    <property type="term" value="C:cytoplasm"/>
    <property type="evidence" value="ECO:0007669"/>
    <property type="project" value="UniProtKB-SubCell"/>
</dbReference>
<dbReference type="GO" id="GO:0004814">
    <property type="term" value="F:arginine-tRNA ligase activity"/>
    <property type="evidence" value="ECO:0007669"/>
    <property type="project" value="UniProtKB-UniRule"/>
</dbReference>
<dbReference type="GO" id="GO:0005524">
    <property type="term" value="F:ATP binding"/>
    <property type="evidence" value="ECO:0007669"/>
    <property type="project" value="UniProtKB-UniRule"/>
</dbReference>
<dbReference type="GO" id="GO:0006420">
    <property type="term" value="P:arginyl-tRNA aminoacylation"/>
    <property type="evidence" value="ECO:0007669"/>
    <property type="project" value="UniProtKB-UniRule"/>
</dbReference>
<dbReference type="CDD" id="cd07956">
    <property type="entry name" value="Anticodon_Ia_Arg"/>
    <property type="match status" value="1"/>
</dbReference>
<dbReference type="CDD" id="cd00671">
    <property type="entry name" value="ArgRS_core"/>
    <property type="match status" value="1"/>
</dbReference>
<dbReference type="FunFam" id="1.10.730.10:FF:000001">
    <property type="entry name" value="Arginine--tRNA ligase"/>
    <property type="match status" value="1"/>
</dbReference>
<dbReference type="FunFam" id="3.30.1360.70:FF:000001">
    <property type="entry name" value="Arginine--tRNA ligase"/>
    <property type="match status" value="1"/>
</dbReference>
<dbReference type="FunFam" id="3.40.50.620:FF:000030">
    <property type="entry name" value="Arginine--tRNA ligase"/>
    <property type="match status" value="1"/>
</dbReference>
<dbReference type="Gene3D" id="3.30.1360.70">
    <property type="entry name" value="Arginyl tRNA synthetase N-terminal domain"/>
    <property type="match status" value="1"/>
</dbReference>
<dbReference type="Gene3D" id="3.40.50.620">
    <property type="entry name" value="HUPs"/>
    <property type="match status" value="1"/>
</dbReference>
<dbReference type="Gene3D" id="1.10.730.10">
    <property type="entry name" value="Isoleucyl-tRNA Synthetase, Domain 1"/>
    <property type="match status" value="1"/>
</dbReference>
<dbReference type="HAMAP" id="MF_00123">
    <property type="entry name" value="Arg_tRNA_synth"/>
    <property type="match status" value="1"/>
</dbReference>
<dbReference type="InterPro" id="IPR001412">
    <property type="entry name" value="aa-tRNA-synth_I_CS"/>
</dbReference>
<dbReference type="InterPro" id="IPR001278">
    <property type="entry name" value="Arg-tRNA-ligase"/>
</dbReference>
<dbReference type="InterPro" id="IPR005148">
    <property type="entry name" value="Arg-tRNA-synth_N"/>
</dbReference>
<dbReference type="InterPro" id="IPR036695">
    <property type="entry name" value="Arg-tRNA-synth_N_sf"/>
</dbReference>
<dbReference type="InterPro" id="IPR035684">
    <property type="entry name" value="ArgRS_core"/>
</dbReference>
<dbReference type="InterPro" id="IPR008909">
    <property type="entry name" value="DALR_anticod-bd"/>
</dbReference>
<dbReference type="InterPro" id="IPR014729">
    <property type="entry name" value="Rossmann-like_a/b/a_fold"/>
</dbReference>
<dbReference type="InterPro" id="IPR009080">
    <property type="entry name" value="tRNAsynth_Ia_anticodon-bd"/>
</dbReference>
<dbReference type="NCBIfam" id="TIGR00456">
    <property type="entry name" value="argS"/>
    <property type="match status" value="1"/>
</dbReference>
<dbReference type="PANTHER" id="PTHR11956:SF5">
    <property type="entry name" value="ARGININE--TRNA LIGASE, CYTOPLASMIC"/>
    <property type="match status" value="1"/>
</dbReference>
<dbReference type="PANTHER" id="PTHR11956">
    <property type="entry name" value="ARGINYL-TRNA SYNTHETASE"/>
    <property type="match status" value="1"/>
</dbReference>
<dbReference type="Pfam" id="PF03485">
    <property type="entry name" value="Arg_tRNA_synt_N"/>
    <property type="match status" value="1"/>
</dbReference>
<dbReference type="Pfam" id="PF05746">
    <property type="entry name" value="DALR_1"/>
    <property type="match status" value="1"/>
</dbReference>
<dbReference type="Pfam" id="PF00750">
    <property type="entry name" value="tRNA-synt_1d"/>
    <property type="match status" value="1"/>
</dbReference>
<dbReference type="PRINTS" id="PR01038">
    <property type="entry name" value="TRNASYNTHARG"/>
</dbReference>
<dbReference type="SMART" id="SM01016">
    <property type="entry name" value="Arg_tRNA_synt_N"/>
    <property type="match status" value="1"/>
</dbReference>
<dbReference type="SMART" id="SM00836">
    <property type="entry name" value="DALR_1"/>
    <property type="match status" value="1"/>
</dbReference>
<dbReference type="SUPFAM" id="SSF47323">
    <property type="entry name" value="Anticodon-binding domain of a subclass of class I aminoacyl-tRNA synthetases"/>
    <property type="match status" value="1"/>
</dbReference>
<dbReference type="SUPFAM" id="SSF55190">
    <property type="entry name" value="Arginyl-tRNA synthetase (ArgRS), N-terminal 'additional' domain"/>
    <property type="match status" value="1"/>
</dbReference>
<dbReference type="SUPFAM" id="SSF52374">
    <property type="entry name" value="Nucleotidylyl transferase"/>
    <property type="match status" value="1"/>
</dbReference>
<dbReference type="PROSITE" id="PS00178">
    <property type="entry name" value="AA_TRNA_LIGASE_I"/>
    <property type="match status" value="1"/>
</dbReference>
<comment type="catalytic activity">
    <reaction evidence="1">
        <text>tRNA(Arg) + L-arginine + ATP = L-arginyl-tRNA(Arg) + AMP + diphosphate</text>
        <dbReference type="Rhea" id="RHEA:20301"/>
        <dbReference type="Rhea" id="RHEA-COMP:9658"/>
        <dbReference type="Rhea" id="RHEA-COMP:9673"/>
        <dbReference type="ChEBI" id="CHEBI:30616"/>
        <dbReference type="ChEBI" id="CHEBI:32682"/>
        <dbReference type="ChEBI" id="CHEBI:33019"/>
        <dbReference type="ChEBI" id="CHEBI:78442"/>
        <dbReference type="ChEBI" id="CHEBI:78513"/>
        <dbReference type="ChEBI" id="CHEBI:456215"/>
        <dbReference type="EC" id="6.1.1.19"/>
    </reaction>
</comment>
<comment type="subunit">
    <text evidence="1">Monomer.</text>
</comment>
<comment type="subcellular location">
    <subcellularLocation>
        <location evidence="1">Cytoplasm</location>
    </subcellularLocation>
</comment>
<comment type="similarity">
    <text evidence="1">Belongs to the class-I aminoacyl-tRNA synthetase family.</text>
</comment>